<feature type="chain" id="PRO_0000203664" description="Guanine nucleotide-binding protein alpha-6 subunit">
    <location>
        <begin position="1"/>
        <end position="347"/>
    </location>
</feature>
<feature type="domain" description="G-alpha" evidence="2">
    <location>
        <begin position="30"/>
        <end position="347"/>
    </location>
</feature>
<feature type="region of interest" description="G1 motif" evidence="2">
    <location>
        <begin position="33"/>
        <end position="46"/>
    </location>
</feature>
<feature type="region of interest" description="G2 motif" evidence="2">
    <location>
        <begin position="170"/>
        <end position="178"/>
    </location>
</feature>
<feature type="region of interest" description="G3 motif" evidence="2">
    <location>
        <begin position="193"/>
        <end position="202"/>
    </location>
</feature>
<feature type="region of interest" description="G4 motif" evidence="2">
    <location>
        <begin position="262"/>
        <end position="269"/>
    </location>
</feature>
<feature type="region of interest" description="G5 motif" evidence="2">
    <location>
        <begin position="320"/>
        <end position="325"/>
    </location>
</feature>
<feature type="binding site" evidence="1">
    <location>
        <begin position="38"/>
        <end position="45"/>
    </location>
    <ligand>
        <name>GTP</name>
        <dbReference type="ChEBI" id="CHEBI:37565"/>
    </ligand>
</feature>
<feature type="binding site" evidence="1">
    <location>
        <position position="45"/>
    </location>
    <ligand>
        <name>Mg(2+)</name>
        <dbReference type="ChEBI" id="CHEBI:18420"/>
    </ligand>
</feature>
<feature type="binding site" evidence="1">
    <location>
        <begin position="172"/>
        <end position="178"/>
    </location>
    <ligand>
        <name>GTP</name>
        <dbReference type="ChEBI" id="CHEBI:37565"/>
    </ligand>
</feature>
<feature type="binding site" evidence="1">
    <location>
        <position position="178"/>
    </location>
    <ligand>
        <name>Mg(2+)</name>
        <dbReference type="ChEBI" id="CHEBI:18420"/>
    </ligand>
</feature>
<feature type="binding site" evidence="1">
    <location>
        <begin position="197"/>
        <end position="201"/>
    </location>
    <ligand>
        <name>GTP</name>
        <dbReference type="ChEBI" id="CHEBI:37565"/>
    </ligand>
</feature>
<feature type="binding site" evidence="1">
    <location>
        <begin position="266"/>
        <end position="269"/>
    </location>
    <ligand>
        <name>GTP</name>
        <dbReference type="ChEBI" id="CHEBI:37565"/>
    </ligand>
</feature>
<feature type="binding site" evidence="1">
    <location>
        <position position="322"/>
    </location>
    <ligand>
        <name>GTP</name>
        <dbReference type="ChEBI" id="CHEBI:37565"/>
    </ligand>
</feature>
<protein>
    <recommendedName>
        <fullName>Guanine nucleotide-binding protein alpha-6 subunit</fullName>
        <shortName>G alpha-6</shortName>
    </recommendedName>
</protein>
<evidence type="ECO:0000250" key="1"/>
<evidence type="ECO:0000255" key="2">
    <source>
        <dbReference type="PROSITE-ProRule" id="PRU01230"/>
    </source>
</evidence>
<evidence type="ECO:0000305" key="3"/>
<reference key="1">
    <citation type="journal article" date="2005" name="Nature">
        <title>The genome of the social amoeba Dictyostelium discoideum.</title>
        <authorList>
            <person name="Eichinger L."/>
            <person name="Pachebat J.A."/>
            <person name="Gloeckner G."/>
            <person name="Rajandream M.A."/>
            <person name="Sucgang R."/>
            <person name="Berriman M."/>
            <person name="Song J."/>
            <person name="Olsen R."/>
            <person name="Szafranski K."/>
            <person name="Xu Q."/>
            <person name="Tunggal B."/>
            <person name="Kummerfeld S."/>
            <person name="Madera M."/>
            <person name="Konfortov B.A."/>
            <person name="Rivero F."/>
            <person name="Bankier A.T."/>
            <person name="Lehmann R."/>
            <person name="Hamlin N."/>
            <person name="Davies R."/>
            <person name="Gaudet P."/>
            <person name="Fey P."/>
            <person name="Pilcher K."/>
            <person name="Chen G."/>
            <person name="Saunders D."/>
            <person name="Sodergren E.J."/>
            <person name="Davis P."/>
            <person name="Kerhornou A."/>
            <person name="Nie X."/>
            <person name="Hall N."/>
            <person name="Anjard C."/>
            <person name="Hemphill L."/>
            <person name="Bason N."/>
            <person name="Farbrother P."/>
            <person name="Desany B."/>
            <person name="Just E."/>
            <person name="Morio T."/>
            <person name="Rost R."/>
            <person name="Churcher C.M."/>
            <person name="Cooper J."/>
            <person name="Haydock S."/>
            <person name="van Driessche N."/>
            <person name="Cronin A."/>
            <person name="Goodhead I."/>
            <person name="Muzny D.M."/>
            <person name="Mourier T."/>
            <person name="Pain A."/>
            <person name="Lu M."/>
            <person name="Harper D."/>
            <person name="Lindsay R."/>
            <person name="Hauser H."/>
            <person name="James K.D."/>
            <person name="Quiles M."/>
            <person name="Madan Babu M."/>
            <person name="Saito T."/>
            <person name="Buchrieser C."/>
            <person name="Wardroper A."/>
            <person name="Felder M."/>
            <person name="Thangavelu M."/>
            <person name="Johnson D."/>
            <person name="Knights A."/>
            <person name="Loulseged H."/>
            <person name="Mungall K.L."/>
            <person name="Oliver K."/>
            <person name="Price C."/>
            <person name="Quail M.A."/>
            <person name="Urushihara H."/>
            <person name="Hernandez J."/>
            <person name="Rabbinowitsch E."/>
            <person name="Steffen D."/>
            <person name="Sanders M."/>
            <person name="Ma J."/>
            <person name="Kohara Y."/>
            <person name="Sharp S."/>
            <person name="Simmonds M.N."/>
            <person name="Spiegler S."/>
            <person name="Tivey A."/>
            <person name="Sugano S."/>
            <person name="White B."/>
            <person name="Walker D."/>
            <person name="Woodward J.R."/>
            <person name="Winckler T."/>
            <person name="Tanaka Y."/>
            <person name="Shaulsky G."/>
            <person name="Schleicher M."/>
            <person name="Weinstock G.M."/>
            <person name="Rosenthal A."/>
            <person name="Cox E.C."/>
            <person name="Chisholm R.L."/>
            <person name="Gibbs R.A."/>
            <person name="Loomis W.F."/>
            <person name="Platzer M."/>
            <person name="Kay R.R."/>
            <person name="Williams J.G."/>
            <person name="Dear P.H."/>
            <person name="Noegel A.A."/>
            <person name="Barrell B.G."/>
            <person name="Kuspa A."/>
        </authorList>
    </citation>
    <scope>NUCLEOTIDE SEQUENCE [LARGE SCALE GENOMIC DNA]</scope>
    <source>
        <strain>AX4</strain>
    </source>
</reference>
<reference key="2">
    <citation type="journal article" date="1991" name="Biochem. Biophys. Res. Commun.">
        <title>Dictyostelium transiently expresses eight distinct G-protein alpha-subunits during its developmental program.</title>
        <authorList>
            <person name="Wu L."/>
            <person name="Devreotes P.N."/>
        </authorList>
    </citation>
    <scope>NUCLEOTIDE SEQUENCE [MRNA] OF 44-196</scope>
    <source>
        <strain>AX3</strain>
    </source>
</reference>
<comment type="function">
    <text>Guanine nucleotide-binding proteins (G proteins) are involved as modulators or transducers in various transmembrane signaling systems. G alpha-6 is involved in the folic acid chemotaxis signal transduction pathway.</text>
</comment>
<comment type="subunit">
    <text>G proteins are composed of 3 units; alpha, beta and gamma. The alpha chain contains the guanine nucleotide binding site.</text>
</comment>
<comment type="developmental stage">
    <text>Expressed primarily in vegetative cells.</text>
</comment>
<comment type="similarity">
    <text evidence="3">Belongs to the G-alpha family.</text>
</comment>
<keyword id="KW-0342">GTP-binding</keyword>
<keyword id="KW-0460">Magnesium</keyword>
<keyword id="KW-0479">Metal-binding</keyword>
<keyword id="KW-0547">Nucleotide-binding</keyword>
<keyword id="KW-1185">Reference proteome</keyword>
<keyword id="KW-0807">Transducer</keyword>
<gene>
    <name type="primary">gpaF</name>
    <name type="ORF">DDB_G0283151</name>
</gene>
<dbReference type="EMBL" id="AAFI02000051">
    <property type="protein sequence ID" value="EAL65814.1"/>
    <property type="molecule type" value="Genomic_DNA"/>
</dbReference>
<dbReference type="PIR" id="JH0247">
    <property type="entry name" value="JH0247"/>
</dbReference>
<dbReference type="RefSeq" id="XP_639172.1">
    <property type="nucleotide sequence ID" value="XM_634080.1"/>
</dbReference>
<dbReference type="SMR" id="P34044"/>
<dbReference type="FunCoup" id="P34044">
    <property type="interactions" value="6"/>
</dbReference>
<dbReference type="STRING" id="44689.P34044"/>
<dbReference type="PaxDb" id="44689-DDB0230127"/>
<dbReference type="EnsemblProtists" id="EAL65814">
    <property type="protein sequence ID" value="EAL65814"/>
    <property type="gene ID" value="DDB_G0283151"/>
</dbReference>
<dbReference type="GeneID" id="8623948"/>
<dbReference type="KEGG" id="ddi:DDB_G0283151"/>
<dbReference type="dictyBase" id="DDB_G0283151">
    <property type="gene designation" value="gpaF"/>
</dbReference>
<dbReference type="VEuPathDB" id="AmoebaDB:DDB_G0283151"/>
<dbReference type="eggNOG" id="KOG0082">
    <property type="taxonomic scope" value="Eukaryota"/>
</dbReference>
<dbReference type="HOGENOM" id="CLU_014184_6_0_1"/>
<dbReference type="InParanoid" id="P34044"/>
<dbReference type="OMA" id="INYGHPD"/>
<dbReference type="PhylomeDB" id="P34044"/>
<dbReference type="Reactome" id="R-DDI-112043">
    <property type="pathway name" value="PLC beta mediated events"/>
</dbReference>
<dbReference type="Reactome" id="R-DDI-170660">
    <property type="pathway name" value="Adenylate cyclase activating pathway"/>
</dbReference>
<dbReference type="Reactome" id="R-DDI-170670">
    <property type="pathway name" value="Adenylate cyclase inhibitory pathway"/>
</dbReference>
<dbReference type="Reactome" id="R-DDI-202040">
    <property type="pathway name" value="G-protein activation"/>
</dbReference>
<dbReference type="Reactome" id="R-DDI-399997">
    <property type="pathway name" value="Acetylcholine regulates insulin secretion"/>
</dbReference>
<dbReference type="Reactome" id="R-DDI-416476">
    <property type="pathway name" value="G alpha (q) signalling events"/>
</dbReference>
<dbReference type="Reactome" id="R-DDI-416482">
    <property type="pathway name" value="G alpha (12/13) signalling events"/>
</dbReference>
<dbReference type="Reactome" id="R-DDI-418592">
    <property type="pathway name" value="ADP signalling through P2Y purinoceptor 1"/>
</dbReference>
<dbReference type="Reactome" id="R-DDI-434316">
    <property type="pathway name" value="Fatty Acids bound to GPR40 (FFAR1) regulate insulin secretion"/>
</dbReference>
<dbReference type="Reactome" id="R-DDI-9013148">
    <property type="pathway name" value="CDC42 GTPase cycle"/>
</dbReference>
<dbReference type="Reactome" id="R-DDI-9013149">
    <property type="pathway name" value="RAC1 GTPase cycle"/>
</dbReference>
<dbReference type="Reactome" id="R-DDI-9856530">
    <property type="pathway name" value="High laminar flow shear stress activates signaling by PIEZO1 and PECAM1:CDH5:KDR in endothelial cells"/>
</dbReference>
<dbReference type="PRO" id="PR:P34044"/>
<dbReference type="Proteomes" id="UP000002195">
    <property type="component" value="Chromosome 4"/>
</dbReference>
<dbReference type="GO" id="GO:0005737">
    <property type="term" value="C:cytoplasm"/>
    <property type="evidence" value="ECO:0000318"/>
    <property type="project" value="GO_Central"/>
</dbReference>
<dbReference type="GO" id="GO:0005834">
    <property type="term" value="C:heterotrimeric G-protein complex"/>
    <property type="evidence" value="ECO:0000318"/>
    <property type="project" value="GO_Central"/>
</dbReference>
<dbReference type="GO" id="GO:0001664">
    <property type="term" value="F:G protein-coupled receptor binding"/>
    <property type="evidence" value="ECO:0000318"/>
    <property type="project" value="GO_Central"/>
</dbReference>
<dbReference type="GO" id="GO:0031683">
    <property type="term" value="F:G-protein beta/gamma-subunit complex binding"/>
    <property type="evidence" value="ECO:0000318"/>
    <property type="project" value="GO_Central"/>
</dbReference>
<dbReference type="GO" id="GO:0005525">
    <property type="term" value="F:GTP binding"/>
    <property type="evidence" value="ECO:0007669"/>
    <property type="project" value="UniProtKB-KW"/>
</dbReference>
<dbReference type="GO" id="GO:0003924">
    <property type="term" value="F:GTPase activity"/>
    <property type="evidence" value="ECO:0000318"/>
    <property type="project" value="GO_Central"/>
</dbReference>
<dbReference type="GO" id="GO:0046872">
    <property type="term" value="F:metal ion binding"/>
    <property type="evidence" value="ECO:0007669"/>
    <property type="project" value="UniProtKB-KW"/>
</dbReference>
<dbReference type="GO" id="GO:0007188">
    <property type="term" value="P:adenylate cyclase-modulating G protein-coupled receptor signaling pathway"/>
    <property type="evidence" value="ECO:0000318"/>
    <property type="project" value="GO_Central"/>
</dbReference>
<dbReference type="CDD" id="cd00066">
    <property type="entry name" value="G-alpha"/>
    <property type="match status" value="1"/>
</dbReference>
<dbReference type="FunFam" id="3.40.50.300:FF:002307">
    <property type="entry name" value="Guanine nucleotide-binding protein G(k) subunit alpha"/>
    <property type="match status" value="1"/>
</dbReference>
<dbReference type="FunFam" id="1.10.400.10:FF:000007">
    <property type="entry name" value="Guanine nucleotide-binding protein subunit alpha"/>
    <property type="match status" value="1"/>
</dbReference>
<dbReference type="Gene3D" id="1.10.400.10">
    <property type="entry name" value="GI Alpha 1, domain 2-like"/>
    <property type="match status" value="1"/>
</dbReference>
<dbReference type="Gene3D" id="3.40.50.300">
    <property type="entry name" value="P-loop containing nucleotide triphosphate hydrolases"/>
    <property type="match status" value="1"/>
</dbReference>
<dbReference type="InterPro" id="IPR001019">
    <property type="entry name" value="Gprotein_alpha_su"/>
</dbReference>
<dbReference type="InterPro" id="IPR011025">
    <property type="entry name" value="GproteinA_insert"/>
</dbReference>
<dbReference type="InterPro" id="IPR027417">
    <property type="entry name" value="P-loop_NTPase"/>
</dbReference>
<dbReference type="PANTHER" id="PTHR10218">
    <property type="entry name" value="GTP-BINDING PROTEIN ALPHA SUBUNIT"/>
    <property type="match status" value="1"/>
</dbReference>
<dbReference type="PANTHER" id="PTHR10218:SF324">
    <property type="entry name" value="GUANINE NUCLEOTIDE-BINDING PROTEIN ALPHA-6 SUBUNIT-RELATED"/>
    <property type="match status" value="1"/>
</dbReference>
<dbReference type="Pfam" id="PF00503">
    <property type="entry name" value="G-alpha"/>
    <property type="match status" value="1"/>
</dbReference>
<dbReference type="PRINTS" id="PR00318">
    <property type="entry name" value="GPROTEINA"/>
</dbReference>
<dbReference type="SMART" id="SM00275">
    <property type="entry name" value="G_alpha"/>
    <property type="match status" value="1"/>
</dbReference>
<dbReference type="SUPFAM" id="SSF52540">
    <property type="entry name" value="P-loop containing nucleoside triphosphate hydrolases"/>
    <property type="match status" value="1"/>
</dbReference>
<dbReference type="SUPFAM" id="SSF47895">
    <property type="entry name" value="Transducin (alpha subunit), insertion domain"/>
    <property type="match status" value="1"/>
</dbReference>
<dbReference type="PROSITE" id="PS51882">
    <property type="entry name" value="G_ALPHA"/>
    <property type="match status" value="1"/>
</dbReference>
<accession>P34044</accession>
<accession>Q54RH3</accession>
<name>GPA6_DICDI</name>
<sequence>MAFLCKSNDNTKVSMEIEKSIKDDKRTFLGITQVLLLGAGESGKSTIFKQLKILQENGLWTTKELQEFSNTIYINIITQLQVLINAAESIGIQLQPENIQLSKDYLELNHSSVTWTKEIGENSVRLWNDSGIKSTFEKRDKEFQLNDSAEYFFNNLQRVTQDNYIPTPQDALRARVTTKGIIEADVTFDNINMKIIDVGGQRSQRRKWIHCFDKVSAVIYVAGLSEYDQALREDINVNKMDESLSLFKEICNSKWFDSSSIILFLNKKDMFIEKLKRVPFKTYDKKYTGENSFEAVSLHIQRKFESVKIDPNKKIYTHFTIAVDTENIEFVFKVIKKIIVGHVMDLV</sequence>
<proteinExistence type="evidence at transcript level"/>
<organism>
    <name type="scientific">Dictyostelium discoideum</name>
    <name type="common">Social amoeba</name>
    <dbReference type="NCBI Taxonomy" id="44689"/>
    <lineage>
        <taxon>Eukaryota</taxon>
        <taxon>Amoebozoa</taxon>
        <taxon>Evosea</taxon>
        <taxon>Eumycetozoa</taxon>
        <taxon>Dictyostelia</taxon>
        <taxon>Dictyosteliales</taxon>
        <taxon>Dictyosteliaceae</taxon>
        <taxon>Dictyostelium</taxon>
    </lineage>
</organism>